<dbReference type="EMBL" id="CP001177">
    <property type="protein sequence ID" value="ACJ79763.1"/>
    <property type="molecule type" value="Genomic_DNA"/>
</dbReference>
<dbReference type="SMR" id="B7HY99"/>
<dbReference type="KEGG" id="bcr:BCAH187_A5517"/>
<dbReference type="HOGENOM" id="CLU_116648_1_0_9"/>
<dbReference type="Proteomes" id="UP000002214">
    <property type="component" value="Chromosome"/>
</dbReference>
<dbReference type="GO" id="GO:0000428">
    <property type="term" value="C:DNA-directed RNA polymerase complex"/>
    <property type="evidence" value="ECO:0007669"/>
    <property type="project" value="UniProtKB-KW"/>
</dbReference>
<dbReference type="GO" id="GO:0003899">
    <property type="term" value="F:DNA-directed RNA polymerase activity"/>
    <property type="evidence" value="ECO:0007669"/>
    <property type="project" value="UniProtKB-UniRule"/>
</dbReference>
<dbReference type="GO" id="GO:0006351">
    <property type="term" value="P:DNA-templated transcription"/>
    <property type="evidence" value="ECO:0007669"/>
    <property type="project" value="InterPro"/>
</dbReference>
<dbReference type="GO" id="GO:0006355">
    <property type="term" value="P:regulation of DNA-templated transcription"/>
    <property type="evidence" value="ECO:0007669"/>
    <property type="project" value="UniProtKB-UniRule"/>
</dbReference>
<dbReference type="FunFam" id="1.10.10.1250:FF:000001">
    <property type="entry name" value="Probable DNA-directed RNA polymerase subunit delta"/>
    <property type="match status" value="1"/>
</dbReference>
<dbReference type="Gene3D" id="1.10.10.1250">
    <property type="entry name" value="RNA polymerase, subunit delta, N-terminal domain"/>
    <property type="match status" value="1"/>
</dbReference>
<dbReference type="HAMAP" id="MF_00357">
    <property type="entry name" value="RNApol_bact_RpoE"/>
    <property type="match status" value="1"/>
</dbReference>
<dbReference type="InterPro" id="IPR007759">
    <property type="entry name" value="Asxl_HARE-HTH"/>
</dbReference>
<dbReference type="InterPro" id="IPR038087">
    <property type="entry name" value="RNAP_delta_N_dom_sf"/>
</dbReference>
<dbReference type="InterPro" id="IPR029757">
    <property type="entry name" value="RpoE"/>
</dbReference>
<dbReference type="NCBIfam" id="TIGR04567">
    <property type="entry name" value="RNAP_delt_lowGC"/>
    <property type="match status" value="1"/>
</dbReference>
<dbReference type="Pfam" id="PF05066">
    <property type="entry name" value="HARE-HTH"/>
    <property type="match status" value="1"/>
</dbReference>
<dbReference type="PROSITE" id="PS51913">
    <property type="entry name" value="HTH_HARE"/>
    <property type="match status" value="1"/>
</dbReference>
<organism>
    <name type="scientific">Bacillus cereus (strain AH187)</name>
    <dbReference type="NCBI Taxonomy" id="405534"/>
    <lineage>
        <taxon>Bacteria</taxon>
        <taxon>Bacillati</taxon>
        <taxon>Bacillota</taxon>
        <taxon>Bacilli</taxon>
        <taxon>Bacillales</taxon>
        <taxon>Bacillaceae</taxon>
        <taxon>Bacillus</taxon>
        <taxon>Bacillus cereus group</taxon>
    </lineage>
</organism>
<sequence>MDFKQYSPEELKECSMIEVVHSVLGDKKQATTFNELVQEIAQVLGLSQEQVNAKIAQFYTDLNIDGRFINLGENRWGLRSWYPYEQIDEEILPQPKPKKKRKVEEDGFDDYIEEDEDDFDDVDGNEDEDDDVEDLDKVLEDEDGDDDDLDDLDDDEDDFAEEELEYDETEEEEEEEL</sequence>
<keyword id="KW-0240">DNA-directed RNA polymerase</keyword>
<keyword id="KW-0548">Nucleotidyltransferase</keyword>
<keyword id="KW-0804">Transcription</keyword>
<keyword id="KW-0808">Transferase</keyword>
<evidence type="ECO:0000255" key="1">
    <source>
        <dbReference type="HAMAP-Rule" id="MF_00357"/>
    </source>
</evidence>
<evidence type="ECO:0000255" key="2">
    <source>
        <dbReference type="PROSITE-ProRule" id="PRU01261"/>
    </source>
</evidence>
<evidence type="ECO:0000256" key="3">
    <source>
        <dbReference type="SAM" id="MobiDB-lite"/>
    </source>
</evidence>
<accession>B7HY99</accession>
<comment type="function">
    <text evidence="1">Participates in both the initiation and recycling phases of transcription. In the presence of the delta subunit, RNAP displays an increased specificity of transcription, a decreased affinity for nucleic acids, and an increased efficiency of RNA synthesis because of enhanced recycling.</text>
</comment>
<comment type="subunit">
    <text evidence="1">RNAP is composed of a core of 2 alpha, a beta and a beta' subunits. The core is associated with a delta subunit and one of several sigma factors.</text>
</comment>
<comment type="similarity">
    <text evidence="1">Belongs to the RpoE family.</text>
</comment>
<name>RPOE_BACC7</name>
<protein>
    <recommendedName>
        <fullName evidence="1">Probable DNA-directed RNA polymerase subunit delta</fullName>
    </recommendedName>
    <alternativeName>
        <fullName evidence="1">RNAP delta factor</fullName>
    </alternativeName>
</protein>
<gene>
    <name evidence="1" type="primary">rpoE</name>
    <name type="ordered locus">BCAH187_A5517</name>
</gene>
<reference key="1">
    <citation type="submission" date="2008-10" db="EMBL/GenBank/DDBJ databases">
        <title>Genome sequence of Bacillus cereus AH187.</title>
        <authorList>
            <person name="Dodson R.J."/>
            <person name="Durkin A.S."/>
            <person name="Rosovitz M.J."/>
            <person name="Rasko D.A."/>
            <person name="Kolsto A.B."/>
            <person name="Okstad O.A."/>
            <person name="Ravel J."/>
            <person name="Sutton G."/>
        </authorList>
    </citation>
    <scope>NUCLEOTIDE SEQUENCE [LARGE SCALE GENOMIC DNA]</scope>
    <source>
        <strain>AH187</strain>
    </source>
</reference>
<proteinExistence type="inferred from homology"/>
<feature type="chain" id="PRO_1000120563" description="Probable DNA-directed RNA polymerase subunit delta">
    <location>
        <begin position="1"/>
        <end position="177"/>
    </location>
</feature>
<feature type="domain" description="HTH HARE-type" evidence="2">
    <location>
        <begin position="14"/>
        <end position="81"/>
    </location>
</feature>
<feature type="region of interest" description="Disordered" evidence="3">
    <location>
        <begin position="93"/>
        <end position="177"/>
    </location>
</feature>
<feature type="compositionally biased region" description="Acidic residues" evidence="3">
    <location>
        <begin position="106"/>
        <end position="177"/>
    </location>
</feature>